<comment type="function">
    <text evidence="1">Involved in iron-sulfur (Fe-S) cluster assembly. May act as a regulator of Fe-S biogenesis.</text>
</comment>
<comment type="similarity">
    <text evidence="1">Belongs to the frataxin family.</text>
</comment>
<keyword id="KW-0408">Iron</keyword>
<keyword id="KW-0479">Metal-binding</keyword>
<sequence>MKKKLNTKKENNNFYILVNDLFLKIEDNLNLYENEIDIDYEIQDYVMTITFSNKTLIIINKQEPLQQIWLATMQNGYHFDYKNNQWICNRSNKNFWEIFENACSIQSNKDLIFCKK</sequence>
<evidence type="ECO:0000255" key="1">
    <source>
        <dbReference type="HAMAP-Rule" id="MF_00142"/>
    </source>
</evidence>
<gene>
    <name evidence="1" type="primary">cyaY</name>
    <name type="ordered locus">BUAPTUC7_584</name>
</gene>
<reference key="1">
    <citation type="journal article" date="2009" name="Science">
        <title>The dynamics and time scale of ongoing genomic erosion in symbiotic bacteria.</title>
        <authorList>
            <person name="Moran N.A."/>
            <person name="McLaughlin H.J."/>
            <person name="Sorek R."/>
        </authorList>
    </citation>
    <scope>NUCLEOTIDE SEQUENCE [LARGE SCALE GENOMIC DNA]</scope>
    <source>
        <strain>Tuc7</strain>
    </source>
</reference>
<proteinExistence type="inferred from homology"/>
<protein>
    <recommendedName>
        <fullName evidence="1">Iron-sulfur cluster assembly protein CyaY</fullName>
    </recommendedName>
</protein>
<feature type="chain" id="PRO_1000123041" description="Iron-sulfur cluster assembly protein CyaY">
    <location>
        <begin position="1"/>
        <end position="116"/>
    </location>
</feature>
<dbReference type="EMBL" id="CP001158">
    <property type="protein sequence ID" value="ACL30374.1"/>
    <property type="molecule type" value="Genomic_DNA"/>
</dbReference>
<dbReference type="RefSeq" id="WP_010896181.1">
    <property type="nucleotide sequence ID" value="NC_011834.1"/>
</dbReference>
<dbReference type="SMR" id="B8D8A9"/>
<dbReference type="KEGG" id="bau:BUAPTUC7_584"/>
<dbReference type="HOGENOM" id="CLU_080880_3_0_6"/>
<dbReference type="GO" id="GO:0005829">
    <property type="term" value="C:cytosol"/>
    <property type="evidence" value="ECO:0007669"/>
    <property type="project" value="TreeGrafter"/>
</dbReference>
<dbReference type="GO" id="GO:0008199">
    <property type="term" value="F:ferric iron binding"/>
    <property type="evidence" value="ECO:0007669"/>
    <property type="project" value="InterPro"/>
</dbReference>
<dbReference type="GO" id="GO:0008198">
    <property type="term" value="F:ferrous iron binding"/>
    <property type="evidence" value="ECO:0007669"/>
    <property type="project" value="TreeGrafter"/>
</dbReference>
<dbReference type="GO" id="GO:0016226">
    <property type="term" value="P:iron-sulfur cluster assembly"/>
    <property type="evidence" value="ECO:0007669"/>
    <property type="project" value="UniProtKB-UniRule"/>
</dbReference>
<dbReference type="CDD" id="cd00503">
    <property type="entry name" value="Frataxin"/>
    <property type="match status" value="1"/>
</dbReference>
<dbReference type="Gene3D" id="3.30.920.10">
    <property type="entry name" value="Frataxin/CyaY"/>
    <property type="match status" value="1"/>
</dbReference>
<dbReference type="HAMAP" id="MF_00142">
    <property type="entry name" value="CyaY"/>
    <property type="match status" value="1"/>
</dbReference>
<dbReference type="InterPro" id="IPR047584">
    <property type="entry name" value="CyaY"/>
</dbReference>
<dbReference type="InterPro" id="IPR002908">
    <property type="entry name" value="Frataxin/CyaY"/>
</dbReference>
<dbReference type="InterPro" id="IPR036524">
    <property type="entry name" value="Frataxin/CyaY_sf"/>
</dbReference>
<dbReference type="InterPro" id="IPR020895">
    <property type="entry name" value="Frataxin_CS"/>
</dbReference>
<dbReference type="NCBIfam" id="TIGR03421">
    <property type="entry name" value="FeS_CyaY"/>
    <property type="match status" value="1"/>
</dbReference>
<dbReference type="PANTHER" id="PTHR16821">
    <property type="entry name" value="FRATAXIN"/>
    <property type="match status" value="1"/>
</dbReference>
<dbReference type="PANTHER" id="PTHR16821:SF2">
    <property type="entry name" value="FRATAXIN, MITOCHONDRIAL"/>
    <property type="match status" value="1"/>
</dbReference>
<dbReference type="Pfam" id="PF01491">
    <property type="entry name" value="Frataxin_Cyay"/>
    <property type="match status" value="1"/>
</dbReference>
<dbReference type="SMART" id="SM01219">
    <property type="entry name" value="Frataxin_Cyay"/>
    <property type="match status" value="1"/>
</dbReference>
<dbReference type="SUPFAM" id="SSF55387">
    <property type="entry name" value="Frataxin/Nqo15-like"/>
    <property type="match status" value="1"/>
</dbReference>
<dbReference type="PROSITE" id="PS01344">
    <property type="entry name" value="FRATAXIN_1"/>
    <property type="match status" value="1"/>
</dbReference>
<dbReference type="PROSITE" id="PS50810">
    <property type="entry name" value="FRATAXIN_2"/>
    <property type="match status" value="1"/>
</dbReference>
<accession>B8D8A9</accession>
<organism>
    <name type="scientific">Buchnera aphidicola subsp. Acyrthosiphon pisum (strain Tuc7)</name>
    <dbReference type="NCBI Taxonomy" id="561501"/>
    <lineage>
        <taxon>Bacteria</taxon>
        <taxon>Pseudomonadati</taxon>
        <taxon>Pseudomonadota</taxon>
        <taxon>Gammaproteobacteria</taxon>
        <taxon>Enterobacterales</taxon>
        <taxon>Erwiniaceae</taxon>
        <taxon>Buchnera</taxon>
    </lineage>
</organism>
<name>CYAY_BUCAT</name>